<organismHost>
    <name type="scientific">Ornithodoros</name>
    <name type="common">relapsing fever ticks</name>
    <dbReference type="NCBI Taxonomy" id="6937"/>
</organismHost>
<organismHost>
    <name type="scientific">Phacochoerus aethiopicus</name>
    <name type="common">Warthog</name>
    <dbReference type="NCBI Taxonomy" id="85517"/>
</organismHost>
<organismHost>
    <name type="scientific">Phacochoerus africanus</name>
    <name type="common">Warthog</name>
    <dbReference type="NCBI Taxonomy" id="41426"/>
</organismHost>
<organismHost>
    <name type="scientific">Potamochoerus larvatus</name>
    <name type="common">Bushpig</name>
    <dbReference type="NCBI Taxonomy" id="273792"/>
</organismHost>
<organismHost>
    <name type="scientific">Sus scrofa</name>
    <name type="common">Pig</name>
    <dbReference type="NCBI Taxonomy" id="9823"/>
</organismHost>
<sequence length="124" mass="14169">MLVIFLGILGLLANQVLGLPIQAGGHLCSTDNPPQEELGYWCTYMESCKFCWECAHGICKNKVNESMPLIIENSYLTSCEVSRWYNQCTYGEGNGHYHVMDCSNPVPHNRPHQLRMKIYEKEDL</sequence>
<reference key="1">
    <citation type="submission" date="2003-03" db="EMBL/GenBank/DDBJ databases">
        <title>African swine fever virus genomes.</title>
        <authorList>
            <person name="Kutish G.F."/>
            <person name="Rock D.L."/>
        </authorList>
    </citation>
    <scope>NUCLEOTIDE SEQUENCE [LARGE SCALE GENOMIC DNA]</scope>
</reference>
<feature type="signal peptide" evidence="1">
    <location>
        <begin position="1"/>
        <end position="28"/>
    </location>
</feature>
<feature type="chain" id="PRO_0000373194" description="Protein MGF 110-4L">
    <location>
        <begin position="29"/>
        <end position="124"/>
    </location>
</feature>
<feature type="short sequence motif" description="Prevents secretion from ER" evidence="2">
    <location>
        <begin position="121"/>
        <end position="124"/>
    </location>
</feature>
<feature type="glycosylation site" description="N-linked (GlcNAc...) asparagine; by host" evidence="3">
    <location>
        <position position="64"/>
    </location>
</feature>
<gene>
    <name type="ordered locus">Mal-008</name>
</gene>
<keyword id="KW-0244">Early protein</keyword>
<keyword id="KW-0325">Glycoprotein</keyword>
<keyword id="KW-0732">Signal</keyword>
<keyword id="KW-0946">Virion</keyword>
<comment type="function">
    <text evidence="2">Causes the redistribution of lumenal ER protein to an enlarged ERGIC compartment.</text>
</comment>
<comment type="subcellular location">
    <subcellularLocation>
        <location evidence="2">Virion</location>
    </subcellularLocation>
    <subcellularLocation>
        <location evidence="2">Host endoplasmic reticulum-Golgi intermediate compartment</location>
    </subcellularLocation>
</comment>
<comment type="induction">
    <text evidence="4">Expressed in the early phase of the viral replicative cycle.</text>
</comment>
<comment type="similarity">
    <text evidence="4">Belongs to the asfivirus MGF 110 family.</text>
</comment>
<name>1104L_ASFM2</name>
<dbReference type="EMBL" id="AY261361">
    <property type="status" value="NOT_ANNOTATED_CDS"/>
    <property type="molecule type" value="Genomic_DNA"/>
</dbReference>
<dbReference type="Proteomes" id="UP000000860">
    <property type="component" value="Segment"/>
</dbReference>
<dbReference type="GO" id="GO:0044172">
    <property type="term" value="C:host cell endoplasmic reticulum-Golgi intermediate compartment"/>
    <property type="evidence" value="ECO:0007669"/>
    <property type="project" value="UniProtKB-SubCell"/>
</dbReference>
<dbReference type="GO" id="GO:0044423">
    <property type="term" value="C:virion component"/>
    <property type="evidence" value="ECO:0007669"/>
    <property type="project" value="UniProtKB-KW"/>
</dbReference>
<dbReference type="InterPro" id="IPR004848">
    <property type="entry name" value="ASFV_fam_110"/>
</dbReference>
<dbReference type="Pfam" id="PF01639">
    <property type="entry name" value="v110"/>
    <property type="match status" value="1"/>
</dbReference>
<proteinExistence type="inferred from homology"/>
<organism>
    <name type="scientific">African swine fever virus (isolate Tick/Malawi/Lil 20-1/1983)</name>
    <name type="common">ASFV</name>
    <dbReference type="NCBI Taxonomy" id="10500"/>
    <lineage>
        <taxon>Viruses</taxon>
        <taxon>Varidnaviria</taxon>
        <taxon>Bamfordvirae</taxon>
        <taxon>Nucleocytoviricota</taxon>
        <taxon>Pokkesviricetes</taxon>
        <taxon>Asfuvirales</taxon>
        <taxon>Asfarviridae</taxon>
        <taxon>Asfivirus</taxon>
        <taxon>African swine fever virus</taxon>
    </lineage>
</organism>
<protein>
    <recommendedName>
        <fullName>Protein MGF 110-4L</fullName>
    </recommendedName>
</protein>
<accession>P0C9H2</accession>
<evidence type="ECO:0000250" key="1">
    <source>
        <dbReference type="UniProtKB" id="A9JLI5"/>
    </source>
</evidence>
<evidence type="ECO:0000250" key="2">
    <source>
        <dbReference type="UniProtKB" id="P18558"/>
    </source>
</evidence>
<evidence type="ECO:0000255" key="3"/>
<evidence type="ECO:0000305" key="4"/>